<sequence>MREILHIQGGQCGNQIGAKFWEVICDEHGIDHTGKYAGDSDLQLERINVYYNEASGGRFVPRAVLMDLEPGTMDSVRSGPFGQIFRPDNFVFGQSGAGNNWAKGHYTEGAELIDSVLDVVRKEAENCDCLQGFQVCHSLGGGTGSGMGTLLISKIREEYPDRMMLTFSVFPSPKVSDTVVEPYNATLSVHQLVENADECMVLDNEALYDICFRTLKLATPTFGDLNHLISATMSGVTCCLRFPGQLNSDLRKLAVNLIPFPRLHFFMVGFAPLTSRGSQQYRALTVPELTQQMWDSKNMMCAADPRHGRYLTASAMFRGKMSTKEVDEQMLNVQNKNSSYFVEWIPNNVKSSVCDIPPIGLKMSSTFVGNSTSIQEMFRRVSEQFTAMFRRKAFLHWYTGEGMDEMEFTEAESNMNDLVAEYQQYQDATAEDEEYEEEEEEEEET</sequence>
<gene>
    <name type="primary">TUBB7</name>
    <name type="synonym">TUB7</name>
</gene>
<protein>
    <recommendedName>
        <fullName>Tubulin beta-7 chain</fullName>
    </recommendedName>
    <alternativeName>
        <fullName>Beta-7-tubulin</fullName>
    </alternativeName>
</protein>
<keyword id="KW-0963">Cytoplasm</keyword>
<keyword id="KW-0206">Cytoskeleton</keyword>
<keyword id="KW-0342">GTP-binding</keyword>
<keyword id="KW-0460">Magnesium</keyword>
<keyword id="KW-0479">Metal-binding</keyword>
<keyword id="KW-0493">Microtubule</keyword>
<keyword id="KW-0547">Nucleotide-binding</keyword>
<keyword id="KW-1185">Reference proteome</keyword>
<evidence type="ECO:0000250" key="1">
    <source>
        <dbReference type="UniProtKB" id="P68363"/>
    </source>
</evidence>
<evidence type="ECO:0000250" key="2">
    <source>
        <dbReference type="UniProtKB" id="Q13509"/>
    </source>
</evidence>
<evidence type="ECO:0000256" key="3">
    <source>
        <dbReference type="SAM" id="MobiDB-lite"/>
    </source>
</evidence>
<evidence type="ECO:0000305" key="4"/>
<feature type="chain" id="PRO_0000048361" description="Tubulin beta-7 chain">
    <location>
        <begin position="1"/>
        <end position="445"/>
    </location>
</feature>
<feature type="region of interest" description="Disordered" evidence="3">
    <location>
        <begin position="421"/>
        <end position="445"/>
    </location>
</feature>
<feature type="compositionally biased region" description="Acidic residues" evidence="3">
    <location>
        <begin position="429"/>
        <end position="445"/>
    </location>
</feature>
<feature type="binding site" evidence="2">
    <location>
        <position position="11"/>
    </location>
    <ligand>
        <name>GTP</name>
        <dbReference type="ChEBI" id="CHEBI:37565"/>
    </ligand>
</feature>
<feature type="binding site" evidence="1">
    <location>
        <position position="69"/>
    </location>
    <ligand>
        <name>GTP</name>
        <dbReference type="ChEBI" id="CHEBI:37565"/>
    </ligand>
</feature>
<feature type="binding site" evidence="1">
    <location>
        <position position="69"/>
    </location>
    <ligand>
        <name>Mg(2+)</name>
        <dbReference type="ChEBI" id="CHEBI:18420"/>
    </ligand>
</feature>
<feature type="binding site" evidence="2">
    <location>
        <position position="138"/>
    </location>
    <ligand>
        <name>GTP</name>
        <dbReference type="ChEBI" id="CHEBI:37565"/>
    </ligand>
</feature>
<feature type="binding site" evidence="2">
    <location>
        <position position="142"/>
    </location>
    <ligand>
        <name>GTP</name>
        <dbReference type="ChEBI" id="CHEBI:37565"/>
    </ligand>
</feature>
<feature type="binding site" evidence="2">
    <location>
        <position position="143"/>
    </location>
    <ligand>
        <name>GTP</name>
        <dbReference type="ChEBI" id="CHEBI:37565"/>
    </ligand>
</feature>
<feature type="binding site" evidence="2">
    <location>
        <position position="144"/>
    </location>
    <ligand>
        <name>GTP</name>
        <dbReference type="ChEBI" id="CHEBI:37565"/>
    </ligand>
</feature>
<feature type="binding site" evidence="2">
    <location>
        <position position="204"/>
    </location>
    <ligand>
        <name>GTP</name>
        <dbReference type="ChEBI" id="CHEBI:37565"/>
    </ligand>
</feature>
<feature type="binding site" evidence="2">
    <location>
        <position position="226"/>
    </location>
    <ligand>
        <name>GTP</name>
        <dbReference type="ChEBI" id="CHEBI:37565"/>
    </ligand>
</feature>
<name>TBB7_MAIZE</name>
<reference key="1">
    <citation type="journal article" date="1994" name="Plant Mol. Biol.">
        <title>Characterization of four new beta-tubulin genes and their expression during male flower development in maize (Zea mays L.).</title>
        <authorList>
            <person name="Villemur R."/>
            <person name="Haas N.A."/>
            <person name="Joyce C.M."/>
            <person name="Snustad D.P."/>
            <person name="Silflow C.D."/>
        </authorList>
    </citation>
    <scope>NUCLEOTIDE SEQUENCE [MRNA]</scope>
    <source>
        <strain>cv. B73</strain>
        <tissue>Seedling shoot</tissue>
    </source>
</reference>
<dbReference type="EMBL" id="L10634">
    <property type="protein sequence ID" value="AAA19708.1"/>
    <property type="molecule type" value="mRNA"/>
</dbReference>
<dbReference type="PIR" id="S43328">
    <property type="entry name" value="S43328"/>
</dbReference>
<dbReference type="RefSeq" id="NP_001105688.1">
    <property type="nucleotide sequence ID" value="NM_001112218.1"/>
</dbReference>
<dbReference type="SMR" id="Q41784"/>
<dbReference type="STRING" id="4577.Q41784"/>
<dbReference type="PaxDb" id="4577-GRMZM2G043822_P02"/>
<dbReference type="ProMEX" id="Q41784"/>
<dbReference type="EnsemblPlants" id="Zm00001eb390190_T001">
    <property type="protein sequence ID" value="Zm00001eb390190_P001"/>
    <property type="gene ID" value="Zm00001eb390190"/>
</dbReference>
<dbReference type="GeneID" id="542705"/>
<dbReference type="Gramene" id="Zm00001eb390190_T001">
    <property type="protein sequence ID" value="Zm00001eb390190_P001"/>
    <property type="gene ID" value="Zm00001eb390190"/>
</dbReference>
<dbReference type="KEGG" id="zma:542705"/>
<dbReference type="eggNOG" id="KOG1375">
    <property type="taxonomic scope" value="Eukaryota"/>
</dbReference>
<dbReference type="InParanoid" id="Q41784"/>
<dbReference type="OrthoDB" id="732292at2759"/>
<dbReference type="Proteomes" id="UP000007305">
    <property type="component" value="Chromosome 9"/>
</dbReference>
<dbReference type="ExpressionAtlas" id="Q41784">
    <property type="expression patterns" value="baseline and differential"/>
</dbReference>
<dbReference type="GO" id="GO:0005737">
    <property type="term" value="C:cytoplasm"/>
    <property type="evidence" value="ECO:0000318"/>
    <property type="project" value="GO_Central"/>
</dbReference>
<dbReference type="GO" id="GO:0005874">
    <property type="term" value="C:microtubule"/>
    <property type="evidence" value="ECO:0000318"/>
    <property type="project" value="GO_Central"/>
</dbReference>
<dbReference type="GO" id="GO:0005525">
    <property type="term" value="F:GTP binding"/>
    <property type="evidence" value="ECO:0000318"/>
    <property type="project" value="GO_Central"/>
</dbReference>
<dbReference type="GO" id="GO:0003924">
    <property type="term" value="F:GTPase activity"/>
    <property type="evidence" value="ECO:0007669"/>
    <property type="project" value="InterPro"/>
</dbReference>
<dbReference type="GO" id="GO:0046872">
    <property type="term" value="F:metal ion binding"/>
    <property type="evidence" value="ECO:0007669"/>
    <property type="project" value="UniProtKB-KW"/>
</dbReference>
<dbReference type="GO" id="GO:0005200">
    <property type="term" value="F:structural constituent of cytoskeleton"/>
    <property type="evidence" value="ECO:0000318"/>
    <property type="project" value="GO_Central"/>
</dbReference>
<dbReference type="GO" id="GO:0000226">
    <property type="term" value="P:microtubule cytoskeleton organization"/>
    <property type="evidence" value="ECO:0000318"/>
    <property type="project" value="GO_Central"/>
</dbReference>
<dbReference type="GO" id="GO:0000278">
    <property type="term" value="P:mitotic cell cycle"/>
    <property type="evidence" value="ECO:0000318"/>
    <property type="project" value="GO_Central"/>
</dbReference>
<dbReference type="CDD" id="cd02187">
    <property type="entry name" value="beta_tubulin"/>
    <property type="match status" value="1"/>
</dbReference>
<dbReference type="FunFam" id="1.10.287.600:FF:000002">
    <property type="entry name" value="Tubulin beta chain"/>
    <property type="match status" value="1"/>
</dbReference>
<dbReference type="FunFam" id="3.30.1330.20:FF:000002">
    <property type="entry name" value="Tubulin beta chain"/>
    <property type="match status" value="1"/>
</dbReference>
<dbReference type="FunFam" id="3.40.50.1440:FF:000005">
    <property type="entry name" value="Tubulin beta chain"/>
    <property type="match status" value="1"/>
</dbReference>
<dbReference type="Gene3D" id="1.10.287.600">
    <property type="entry name" value="Helix hairpin bin"/>
    <property type="match status" value="1"/>
</dbReference>
<dbReference type="Gene3D" id="3.30.1330.20">
    <property type="entry name" value="Tubulin/FtsZ, C-terminal domain"/>
    <property type="match status" value="1"/>
</dbReference>
<dbReference type="Gene3D" id="3.40.50.1440">
    <property type="entry name" value="Tubulin/FtsZ, GTPase domain"/>
    <property type="match status" value="1"/>
</dbReference>
<dbReference type="InterPro" id="IPR013838">
    <property type="entry name" value="Beta-tubulin_BS"/>
</dbReference>
<dbReference type="InterPro" id="IPR002453">
    <property type="entry name" value="Beta_tubulin"/>
</dbReference>
<dbReference type="InterPro" id="IPR008280">
    <property type="entry name" value="Tub_FtsZ_C"/>
</dbReference>
<dbReference type="InterPro" id="IPR000217">
    <property type="entry name" value="Tubulin"/>
</dbReference>
<dbReference type="InterPro" id="IPR037103">
    <property type="entry name" value="Tubulin/FtsZ-like_C"/>
</dbReference>
<dbReference type="InterPro" id="IPR018316">
    <property type="entry name" value="Tubulin/FtsZ_2-layer-sand-dom"/>
</dbReference>
<dbReference type="InterPro" id="IPR036525">
    <property type="entry name" value="Tubulin/FtsZ_GTPase_sf"/>
</dbReference>
<dbReference type="InterPro" id="IPR023123">
    <property type="entry name" value="Tubulin_C"/>
</dbReference>
<dbReference type="InterPro" id="IPR017975">
    <property type="entry name" value="Tubulin_CS"/>
</dbReference>
<dbReference type="InterPro" id="IPR003008">
    <property type="entry name" value="Tubulin_FtsZ_GTPase"/>
</dbReference>
<dbReference type="PANTHER" id="PTHR11588">
    <property type="entry name" value="TUBULIN"/>
    <property type="match status" value="1"/>
</dbReference>
<dbReference type="Pfam" id="PF00091">
    <property type="entry name" value="Tubulin"/>
    <property type="match status" value="1"/>
</dbReference>
<dbReference type="Pfam" id="PF03953">
    <property type="entry name" value="Tubulin_C"/>
    <property type="match status" value="1"/>
</dbReference>
<dbReference type="PRINTS" id="PR01163">
    <property type="entry name" value="BETATUBULIN"/>
</dbReference>
<dbReference type="PRINTS" id="PR01161">
    <property type="entry name" value="TUBULIN"/>
</dbReference>
<dbReference type="SMART" id="SM00864">
    <property type="entry name" value="Tubulin"/>
    <property type="match status" value="1"/>
</dbReference>
<dbReference type="SMART" id="SM00865">
    <property type="entry name" value="Tubulin_C"/>
    <property type="match status" value="1"/>
</dbReference>
<dbReference type="SUPFAM" id="SSF55307">
    <property type="entry name" value="Tubulin C-terminal domain-like"/>
    <property type="match status" value="1"/>
</dbReference>
<dbReference type="SUPFAM" id="SSF52490">
    <property type="entry name" value="Tubulin nucleotide-binding domain-like"/>
    <property type="match status" value="1"/>
</dbReference>
<dbReference type="PROSITE" id="PS00227">
    <property type="entry name" value="TUBULIN"/>
    <property type="match status" value="1"/>
</dbReference>
<dbReference type="PROSITE" id="PS00228">
    <property type="entry name" value="TUBULIN_B_AUTOREG"/>
    <property type="match status" value="1"/>
</dbReference>
<proteinExistence type="evidence at transcript level"/>
<organism>
    <name type="scientific">Zea mays</name>
    <name type="common">Maize</name>
    <dbReference type="NCBI Taxonomy" id="4577"/>
    <lineage>
        <taxon>Eukaryota</taxon>
        <taxon>Viridiplantae</taxon>
        <taxon>Streptophyta</taxon>
        <taxon>Embryophyta</taxon>
        <taxon>Tracheophyta</taxon>
        <taxon>Spermatophyta</taxon>
        <taxon>Magnoliopsida</taxon>
        <taxon>Liliopsida</taxon>
        <taxon>Poales</taxon>
        <taxon>Poaceae</taxon>
        <taxon>PACMAD clade</taxon>
        <taxon>Panicoideae</taxon>
        <taxon>Andropogonodae</taxon>
        <taxon>Andropogoneae</taxon>
        <taxon>Tripsacinae</taxon>
        <taxon>Zea</taxon>
    </lineage>
</organism>
<comment type="function">
    <text>Tubulin is the major constituent of microtubules, a cylinder consisting of laterally associated linear protofilaments composed of alpha- and beta-tubulin heterodimers. Microtubules grow by the addition of GTP-tubulin dimers to the microtubule end, where a stabilizing cap forms. Below the cap, tubulin dimers are in GDP-bound state, owing to GTPase activity of alpha-tubulin.</text>
</comment>
<comment type="cofactor">
    <cofactor evidence="1">
        <name>Mg(2+)</name>
        <dbReference type="ChEBI" id="CHEBI:18420"/>
    </cofactor>
</comment>
<comment type="subunit">
    <text>Dimer of alpha and beta chains. A typical microtubule is a hollow water-filled tube with an outer diameter of 25 nm and an inner diameter of 15 nM. Alpha-beta heterodimers associate head-to-tail to form protofilaments running lengthwise along the microtubule wall with the beta-tubulin subunit facing the microtubule plus end conferring a structural polarity. Microtubules usually have 13 protofilaments but different protofilament numbers can be found in some organisms and specialized cells.</text>
</comment>
<comment type="subcellular location">
    <subcellularLocation>
        <location>Cytoplasm</location>
        <location>Cytoskeleton</location>
    </subcellularLocation>
</comment>
<comment type="similarity">
    <text evidence="4">Belongs to the tubulin family.</text>
</comment>
<accession>Q41784</accession>